<dbReference type="EC" id="1.-.-.-"/>
<dbReference type="EMBL" id="AE000516">
    <property type="protein sequence ID" value="AAK47294.1"/>
    <property type="molecule type" value="Genomic_DNA"/>
</dbReference>
<dbReference type="PIR" id="G70926">
    <property type="entry name" value="G70926"/>
</dbReference>
<dbReference type="RefSeq" id="WP_003899532.1">
    <property type="nucleotide sequence ID" value="NZ_KK341227.1"/>
</dbReference>
<dbReference type="SMR" id="P9WJP8"/>
<dbReference type="KEGG" id="mtc:MT2968"/>
<dbReference type="PATRIC" id="fig|83331.31.peg.3208"/>
<dbReference type="HOGENOM" id="CLU_000422_16_1_11"/>
<dbReference type="Proteomes" id="UP000001020">
    <property type="component" value="Chromosome"/>
</dbReference>
<dbReference type="GO" id="GO:0016020">
    <property type="term" value="C:membrane"/>
    <property type="evidence" value="ECO:0007669"/>
    <property type="project" value="TreeGrafter"/>
</dbReference>
<dbReference type="GO" id="GO:0051539">
    <property type="term" value="F:4 iron, 4 sulfur cluster binding"/>
    <property type="evidence" value="ECO:0007669"/>
    <property type="project" value="UniProtKB-KW"/>
</dbReference>
<dbReference type="GO" id="GO:0008863">
    <property type="term" value="F:formate dehydrogenase (NAD+) activity"/>
    <property type="evidence" value="ECO:0007669"/>
    <property type="project" value="InterPro"/>
</dbReference>
<dbReference type="GO" id="GO:0030151">
    <property type="term" value="F:molybdenum ion binding"/>
    <property type="evidence" value="ECO:0007669"/>
    <property type="project" value="InterPro"/>
</dbReference>
<dbReference type="GO" id="GO:0043546">
    <property type="term" value="F:molybdopterin cofactor binding"/>
    <property type="evidence" value="ECO:0007669"/>
    <property type="project" value="InterPro"/>
</dbReference>
<dbReference type="CDD" id="cd02787">
    <property type="entry name" value="MopB_CT_ydeP"/>
    <property type="match status" value="1"/>
</dbReference>
<dbReference type="CDD" id="cd02767">
    <property type="entry name" value="MopB_ydeP"/>
    <property type="match status" value="1"/>
</dbReference>
<dbReference type="FunFam" id="3.40.228.10:FF:000002">
    <property type="entry name" value="Formate dehydrogenase subunit alpha"/>
    <property type="match status" value="1"/>
</dbReference>
<dbReference type="Gene3D" id="3.40.50.740">
    <property type="match status" value="1"/>
</dbReference>
<dbReference type="Gene3D" id="3.40.228.10">
    <property type="entry name" value="Dimethylsulfoxide Reductase, domain 2"/>
    <property type="match status" value="1"/>
</dbReference>
<dbReference type="InterPro" id="IPR009010">
    <property type="entry name" value="Asp_de-COase-like_dom_sf"/>
</dbReference>
<dbReference type="InterPro" id="IPR037951">
    <property type="entry name" value="MopB_CT_YdeP"/>
</dbReference>
<dbReference type="InterPro" id="IPR006657">
    <property type="entry name" value="MoPterin_dinucl-bd_dom"/>
</dbReference>
<dbReference type="InterPro" id="IPR006656">
    <property type="entry name" value="Mopterin_OxRdtase"/>
</dbReference>
<dbReference type="InterPro" id="IPR010046">
    <property type="entry name" value="Mopterin_OxRdtse_a_bac"/>
</dbReference>
<dbReference type="InterPro" id="IPR050123">
    <property type="entry name" value="Prok_molybdopt-oxidoreductase"/>
</dbReference>
<dbReference type="InterPro" id="IPR041953">
    <property type="entry name" value="YdeP_MopB"/>
</dbReference>
<dbReference type="NCBIfam" id="TIGR01701">
    <property type="entry name" value="Fdhalpha-like"/>
    <property type="match status" value="1"/>
</dbReference>
<dbReference type="PANTHER" id="PTHR43105:SF4">
    <property type="entry name" value="PROTEIN YDEP"/>
    <property type="match status" value="1"/>
</dbReference>
<dbReference type="PANTHER" id="PTHR43105">
    <property type="entry name" value="RESPIRATORY NITRATE REDUCTASE"/>
    <property type="match status" value="1"/>
</dbReference>
<dbReference type="Pfam" id="PF00384">
    <property type="entry name" value="Molybdopterin"/>
    <property type="match status" value="1"/>
</dbReference>
<dbReference type="Pfam" id="PF01568">
    <property type="entry name" value="Molydop_binding"/>
    <property type="match status" value="1"/>
</dbReference>
<dbReference type="PIRSF" id="PIRSF000144">
    <property type="entry name" value="CbbBc"/>
    <property type="match status" value="1"/>
</dbReference>
<dbReference type="SUPFAM" id="SSF50692">
    <property type="entry name" value="ADC-like"/>
    <property type="match status" value="1"/>
</dbReference>
<dbReference type="SUPFAM" id="SSF53706">
    <property type="entry name" value="Formate dehydrogenase/DMSO reductase, domains 1-3"/>
    <property type="match status" value="1"/>
</dbReference>
<accession>P9WJP8</accession>
<accession>L0TDW4</accession>
<accession>P65408</accession>
<accession>Q10821</accession>
<protein>
    <recommendedName>
        <fullName>Uncharacterized oxidoreductase MT2968</fullName>
        <ecNumber>1.-.-.-</ecNumber>
    </recommendedName>
</protein>
<sequence>MYVEAVRWQRSAASRDVLADYDEQAVTVAPRKREAAGVRAVMVSLQRGMQQMGALRTAAALARLNQRNGFDCPGCAWPEEPGGRKLAEFCENGAKAVAEEATKRTVTAEFFARHSVAELSAKPEYWLSQQGRLAHPMVLRPGDDHYRPISWDAAYQLIAEQLNGLDSPDRAVFYTSGRTSNEAAFCYQLLVRSFGTNNLPDCSNMCHESSGAALTDSIGIGKGSVTIGDVEHADLIVIAGQNPGTNHPRMLSVLGKAKANGAKIIAVNPLPEAGLIRFKDPQKVNGVVGHGIPIADEFVQIRLGGDMALFAGLGRLLLEAEERVPGSVVDRSFVDNHCAGFDGYRRRTLQVGLDTVMDATGIELAQLQRVAAMLMASQRTVICWAMGLTQHAHAVATIGEVTNVLLLRGMIGKPGAGVCPVRGHSNVQGDRTMGIWEKMPEQFLAALDREFGITSPRAHGFDTVAAIRAMRDGRVSVFMGMGGNFASATPDTAVTEAALRRCALTVQVSTKLNRSHLVHGATALILPTLGRTDRDTRNGRKQLVSVEDSMSMVHLSRGSLHPPSDQVRSEVQIICQLARALFGPGHPVPWERFADDYDTIRDAIAAVVPGCDDYNHKVRVPDGFQLPHPPRDAREFRTSTGKANFAVNPLQWVPVPPGRLVLQTLRSHDQYNTTIYGLDDRYRGVKGGRRVVFINPADIETFGLTAGDRVDLVSEWTDGQGGLQERRAKDFLVVAYSTPVGNAAAYYPETNPLVPLDHTAAQSNTPVSKAIIVRLEPTA</sequence>
<comment type="cofactor">
    <cofactor evidence="2">
        <name>[4Fe-4S] cluster</name>
        <dbReference type="ChEBI" id="CHEBI:49883"/>
    </cofactor>
    <text evidence="2">Binds 1 [4Fe-4S] cluster.</text>
</comment>
<comment type="cofactor">
    <cofactor evidence="1">
        <name>Mo-bis(molybdopterin guanine dinucleotide)</name>
        <dbReference type="ChEBI" id="CHEBI:60539"/>
    </cofactor>
    <text evidence="1">Binds 1 molybdenum-bis(molybdopterin guanine dinucleotide) (Mo-bis-MGD) cofactor per subunit.</text>
</comment>
<comment type="similarity">
    <text evidence="2">Belongs to the prokaryotic molybdopterin-containing oxidoreductase family.</text>
</comment>
<gene>
    <name type="ordered locus">MT2968</name>
</gene>
<feature type="chain" id="PRO_0000427792" description="Uncharacterized oxidoreductase MT2968">
    <location>
        <begin position="1"/>
        <end position="779"/>
    </location>
</feature>
<feature type="binding site" evidence="1">
    <location>
        <position position="72"/>
    </location>
    <ligand>
        <name>[4Fe-4S] cluster</name>
        <dbReference type="ChEBI" id="CHEBI:49883"/>
    </ligand>
</feature>
<feature type="binding site" evidence="1">
    <location>
        <position position="75"/>
    </location>
    <ligand>
        <name>[4Fe-4S] cluster</name>
        <dbReference type="ChEBI" id="CHEBI:49883"/>
    </ligand>
</feature>
<reference key="1">
    <citation type="journal article" date="2002" name="J. Bacteriol.">
        <title>Whole-genome comparison of Mycobacterium tuberculosis clinical and laboratory strains.</title>
        <authorList>
            <person name="Fleischmann R.D."/>
            <person name="Alland D."/>
            <person name="Eisen J.A."/>
            <person name="Carpenter L."/>
            <person name="White O."/>
            <person name="Peterson J.D."/>
            <person name="DeBoy R.T."/>
            <person name="Dodson R.J."/>
            <person name="Gwinn M.L."/>
            <person name="Haft D.H."/>
            <person name="Hickey E.K."/>
            <person name="Kolonay J.F."/>
            <person name="Nelson W.C."/>
            <person name="Umayam L.A."/>
            <person name="Ermolaeva M.D."/>
            <person name="Salzberg S.L."/>
            <person name="Delcher A."/>
            <person name="Utterback T.R."/>
            <person name="Weidman J.F."/>
            <person name="Khouri H.M."/>
            <person name="Gill J."/>
            <person name="Mikula A."/>
            <person name="Bishai W."/>
            <person name="Jacobs W.R. Jr."/>
            <person name="Venter J.C."/>
            <person name="Fraser C.M."/>
        </authorList>
    </citation>
    <scope>NUCLEOTIDE SEQUENCE [LARGE SCALE GENOMIC DNA]</scope>
    <source>
        <strain>CDC 1551 / Oshkosh</strain>
    </source>
</reference>
<proteinExistence type="inferred from homology"/>
<keyword id="KW-0004">4Fe-4S</keyword>
<keyword id="KW-0408">Iron</keyword>
<keyword id="KW-0411">Iron-sulfur</keyword>
<keyword id="KW-0479">Metal-binding</keyword>
<keyword id="KW-0500">Molybdenum</keyword>
<keyword id="KW-0560">Oxidoreductase</keyword>
<keyword id="KW-1185">Reference proteome</keyword>
<organism>
    <name type="scientific">Mycobacterium tuberculosis (strain CDC 1551 / Oshkosh)</name>
    <dbReference type="NCBI Taxonomy" id="83331"/>
    <lineage>
        <taxon>Bacteria</taxon>
        <taxon>Bacillati</taxon>
        <taxon>Actinomycetota</taxon>
        <taxon>Actinomycetes</taxon>
        <taxon>Mycobacteriales</taxon>
        <taxon>Mycobacteriaceae</taxon>
        <taxon>Mycobacterium</taxon>
        <taxon>Mycobacterium tuberculosis complex</taxon>
    </lineage>
</organism>
<evidence type="ECO:0000250" key="1"/>
<evidence type="ECO:0000305" key="2"/>
<name>Y2900_MYCTO</name>